<accession>Q1CL83</accession>
<accession>C4GQI9</accession>
<organism>
    <name type="scientific">Yersinia pestis bv. Antiqua (strain Nepal516)</name>
    <dbReference type="NCBI Taxonomy" id="377628"/>
    <lineage>
        <taxon>Bacteria</taxon>
        <taxon>Pseudomonadati</taxon>
        <taxon>Pseudomonadota</taxon>
        <taxon>Gammaproteobacteria</taxon>
        <taxon>Enterobacterales</taxon>
        <taxon>Yersiniaceae</taxon>
        <taxon>Yersinia</taxon>
    </lineage>
</organism>
<protein>
    <recommendedName>
        <fullName evidence="1">tRNA sulfurtransferase</fullName>
        <ecNumber evidence="1">2.8.1.4</ecNumber>
    </recommendedName>
    <alternativeName>
        <fullName evidence="1">Sulfur carrier protein ThiS sulfurtransferase</fullName>
    </alternativeName>
    <alternativeName>
        <fullName evidence="1">Thiamine biosynthesis protein ThiI</fullName>
    </alternativeName>
    <alternativeName>
        <fullName evidence="1">tRNA 4-thiouridine synthase</fullName>
    </alternativeName>
</protein>
<name>THII_YERPN</name>
<dbReference type="EC" id="2.8.1.4" evidence="1"/>
<dbReference type="EMBL" id="CP000305">
    <property type="protein sequence ID" value="ABG17247.1"/>
    <property type="molecule type" value="Genomic_DNA"/>
</dbReference>
<dbReference type="EMBL" id="ACNQ01000008">
    <property type="protein sequence ID" value="EEO77330.1"/>
    <property type="molecule type" value="Genomic_DNA"/>
</dbReference>
<dbReference type="RefSeq" id="WP_002208658.1">
    <property type="nucleotide sequence ID" value="NZ_ACNQ01000008.1"/>
</dbReference>
<dbReference type="SMR" id="Q1CL83"/>
<dbReference type="GeneID" id="57975539"/>
<dbReference type="KEGG" id="ypn:YPN_0915"/>
<dbReference type="HOGENOM" id="CLU_037952_4_1_6"/>
<dbReference type="UniPathway" id="UPA00060"/>
<dbReference type="Proteomes" id="UP000008936">
    <property type="component" value="Chromosome"/>
</dbReference>
<dbReference type="GO" id="GO:0005829">
    <property type="term" value="C:cytosol"/>
    <property type="evidence" value="ECO:0007669"/>
    <property type="project" value="TreeGrafter"/>
</dbReference>
<dbReference type="GO" id="GO:0005524">
    <property type="term" value="F:ATP binding"/>
    <property type="evidence" value="ECO:0007669"/>
    <property type="project" value="UniProtKB-UniRule"/>
</dbReference>
<dbReference type="GO" id="GO:0004810">
    <property type="term" value="F:CCA tRNA nucleotidyltransferase activity"/>
    <property type="evidence" value="ECO:0007669"/>
    <property type="project" value="InterPro"/>
</dbReference>
<dbReference type="GO" id="GO:0000049">
    <property type="term" value="F:tRNA binding"/>
    <property type="evidence" value="ECO:0007669"/>
    <property type="project" value="UniProtKB-UniRule"/>
</dbReference>
<dbReference type="GO" id="GO:0140741">
    <property type="term" value="F:tRNA-uracil-4 sulfurtransferase activity"/>
    <property type="evidence" value="ECO:0007669"/>
    <property type="project" value="UniProtKB-EC"/>
</dbReference>
<dbReference type="GO" id="GO:0009228">
    <property type="term" value="P:thiamine biosynthetic process"/>
    <property type="evidence" value="ECO:0007669"/>
    <property type="project" value="UniProtKB-KW"/>
</dbReference>
<dbReference type="GO" id="GO:0009229">
    <property type="term" value="P:thiamine diphosphate biosynthetic process"/>
    <property type="evidence" value="ECO:0007669"/>
    <property type="project" value="UniProtKB-UniRule"/>
</dbReference>
<dbReference type="GO" id="GO:0052837">
    <property type="term" value="P:thiazole biosynthetic process"/>
    <property type="evidence" value="ECO:0007669"/>
    <property type="project" value="InterPro"/>
</dbReference>
<dbReference type="GO" id="GO:0002937">
    <property type="term" value="P:tRNA 4-thiouridine biosynthesis"/>
    <property type="evidence" value="ECO:0007669"/>
    <property type="project" value="TreeGrafter"/>
</dbReference>
<dbReference type="CDD" id="cd01712">
    <property type="entry name" value="PPase_ThiI"/>
    <property type="match status" value="1"/>
</dbReference>
<dbReference type="CDD" id="cd00158">
    <property type="entry name" value="RHOD"/>
    <property type="match status" value="1"/>
</dbReference>
<dbReference type="CDD" id="cd11716">
    <property type="entry name" value="THUMP_ThiI"/>
    <property type="match status" value="1"/>
</dbReference>
<dbReference type="FunFam" id="3.30.2130.30:FF:000002">
    <property type="entry name" value="tRNA sulfurtransferase"/>
    <property type="match status" value="1"/>
</dbReference>
<dbReference type="FunFam" id="3.40.250.10:FF:000003">
    <property type="entry name" value="tRNA sulfurtransferase"/>
    <property type="match status" value="1"/>
</dbReference>
<dbReference type="FunFam" id="3.40.50.620:FF:000029">
    <property type="entry name" value="tRNA sulfurtransferase"/>
    <property type="match status" value="1"/>
</dbReference>
<dbReference type="Gene3D" id="3.30.2130.30">
    <property type="match status" value="1"/>
</dbReference>
<dbReference type="Gene3D" id="3.40.50.620">
    <property type="entry name" value="HUPs"/>
    <property type="match status" value="1"/>
</dbReference>
<dbReference type="Gene3D" id="3.40.250.10">
    <property type="entry name" value="Rhodanese-like domain"/>
    <property type="match status" value="1"/>
</dbReference>
<dbReference type="HAMAP" id="MF_00021">
    <property type="entry name" value="ThiI"/>
    <property type="match status" value="1"/>
</dbReference>
<dbReference type="InterPro" id="IPR001763">
    <property type="entry name" value="Rhodanese-like_dom"/>
</dbReference>
<dbReference type="InterPro" id="IPR036873">
    <property type="entry name" value="Rhodanese-like_dom_sf"/>
</dbReference>
<dbReference type="InterPro" id="IPR014729">
    <property type="entry name" value="Rossmann-like_a/b/a_fold"/>
</dbReference>
<dbReference type="InterPro" id="IPR020536">
    <property type="entry name" value="ThiI_AANH"/>
</dbReference>
<dbReference type="InterPro" id="IPR054173">
    <property type="entry name" value="ThiI_fer"/>
</dbReference>
<dbReference type="InterPro" id="IPR049961">
    <property type="entry name" value="ThiI_N"/>
</dbReference>
<dbReference type="InterPro" id="IPR026340">
    <property type="entry name" value="THII_Thiazole_biosynth_dom"/>
</dbReference>
<dbReference type="InterPro" id="IPR004114">
    <property type="entry name" value="THUMP_dom"/>
</dbReference>
<dbReference type="InterPro" id="IPR049962">
    <property type="entry name" value="THUMP_ThiI"/>
</dbReference>
<dbReference type="InterPro" id="IPR003720">
    <property type="entry name" value="tRNA_STrfase"/>
</dbReference>
<dbReference type="InterPro" id="IPR050102">
    <property type="entry name" value="tRNA_sulfurtransferase_ThiI"/>
</dbReference>
<dbReference type="NCBIfam" id="TIGR04271">
    <property type="entry name" value="ThiI_C_thiazole"/>
    <property type="match status" value="1"/>
</dbReference>
<dbReference type="NCBIfam" id="TIGR00342">
    <property type="entry name" value="tRNA uracil 4-sulfurtransferase ThiI"/>
    <property type="match status" value="1"/>
</dbReference>
<dbReference type="PANTHER" id="PTHR43209">
    <property type="entry name" value="TRNA SULFURTRANSFERASE"/>
    <property type="match status" value="1"/>
</dbReference>
<dbReference type="PANTHER" id="PTHR43209:SF1">
    <property type="entry name" value="TRNA SULFURTRANSFERASE"/>
    <property type="match status" value="1"/>
</dbReference>
<dbReference type="Pfam" id="PF00581">
    <property type="entry name" value="Rhodanese"/>
    <property type="match status" value="1"/>
</dbReference>
<dbReference type="Pfam" id="PF02568">
    <property type="entry name" value="ThiI"/>
    <property type="match status" value="1"/>
</dbReference>
<dbReference type="Pfam" id="PF22025">
    <property type="entry name" value="ThiI_fer"/>
    <property type="match status" value="1"/>
</dbReference>
<dbReference type="Pfam" id="PF02926">
    <property type="entry name" value="THUMP"/>
    <property type="match status" value="1"/>
</dbReference>
<dbReference type="SMART" id="SM00981">
    <property type="entry name" value="THUMP"/>
    <property type="match status" value="1"/>
</dbReference>
<dbReference type="SUPFAM" id="SSF52402">
    <property type="entry name" value="Adenine nucleotide alpha hydrolases-like"/>
    <property type="match status" value="1"/>
</dbReference>
<dbReference type="SUPFAM" id="SSF52821">
    <property type="entry name" value="Rhodanese/Cell cycle control phosphatase"/>
    <property type="match status" value="1"/>
</dbReference>
<dbReference type="SUPFAM" id="SSF143437">
    <property type="entry name" value="THUMP domain-like"/>
    <property type="match status" value="1"/>
</dbReference>
<dbReference type="PROSITE" id="PS50206">
    <property type="entry name" value="RHODANESE_3"/>
    <property type="match status" value="1"/>
</dbReference>
<dbReference type="PROSITE" id="PS51165">
    <property type="entry name" value="THUMP"/>
    <property type="match status" value="1"/>
</dbReference>
<keyword id="KW-0067">ATP-binding</keyword>
<keyword id="KW-0963">Cytoplasm</keyword>
<keyword id="KW-1015">Disulfide bond</keyword>
<keyword id="KW-0547">Nucleotide-binding</keyword>
<keyword id="KW-0676">Redox-active center</keyword>
<keyword id="KW-0694">RNA-binding</keyword>
<keyword id="KW-0784">Thiamine biosynthesis</keyword>
<keyword id="KW-0808">Transferase</keyword>
<keyword id="KW-0820">tRNA-binding</keyword>
<feature type="chain" id="PRO_1000074311" description="tRNA sulfurtransferase">
    <location>
        <begin position="1"/>
        <end position="483"/>
    </location>
</feature>
<feature type="domain" description="THUMP" evidence="1">
    <location>
        <begin position="62"/>
        <end position="166"/>
    </location>
</feature>
<feature type="domain" description="Rhodanese" evidence="1">
    <location>
        <begin position="405"/>
        <end position="483"/>
    </location>
</feature>
<feature type="active site" description="Cysteine persulfide intermediate" evidence="1">
    <location>
        <position position="457"/>
    </location>
</feature>
<feature type="binding site" evidence="1">
    <location>
        <begin position="184"/>
        <end position="185"/>
    </location>
    <ligand>
        <name>ATP</name>
        <dbReference type="ChEBI" id="CHEBI:30616"/>
    </ligand>
</feature>
<feature type="binding site" evidence="1">
    <location>
        <position position="266"/>
    </location>
    <ligand>
        <name>ATP</name>
        <dbReference type="ChEBI" id="CHEBI:30616"/>
    </ligand>
</feature>
<feature type="binding site" evidence="1">
    <location>
        <position position="288"/>
    </location>
    <ligand>
        <name>ATP</name>
        <dbReference type="ChEBI" id="CHEBI:30616"/>
    </ligand>
</feature>
<feature type="binding site" evidence="1">
    <location>
        <position position="297"/>
    </location>
    <ligand>
        <name>ATP</name>
        <dbReference type="ChEBI" id="CHEBI:30616"/>
    </ligand>
</feature>
<feature type="disulfide bond" description="Redox-active" evidence="1">
    <location>
        <begin position="345"/>
        <end position="457"/>
    </location>
</feature>
<evidence type="ECO:0000255" key="1">
    <source>
        <dbReference type="HAMAP-Rule" id="MF_00021"/>
    </source>
</evidence>
<proteinExistence type="inferred from homology"/>
<comment type="function">
    <text evidence="1">Catalyzes the ATP-dependent transfer of a sulfur to tRNA to produce 4-thiouridine in position 8 of tRNAs, which functions as a near-UV photosensor. Also catalyzes the transfer of sulfur to the sulfur carrier protein ThiS, forming ThiS-thiocarboxylate. This is a step in the synthesis of thiazole, in the thiamine biosynthesis pathway. The sulfur is donated as persulfide by IscS.</text>
</comment>
<comment type="catalytic activity">
    <reaction evidence="1">
        <text>[ThiI sulfur-carrier protein]-S-sulfanyl-L-cysteine + a uridine in tRNA + 2 reduced [2Fe-2S]-[ferredoxin] + ATP + H(+) = [ThiI sulfur-carrier protein]-L-cysteine + a 4-thiouridine in tRNA + 2 oxidized [2Fe-2S]-[ferredoxin] + AMP + diphosphate</text>
        <dbReference type="Rhea" id="RHEA:24176"/>
        <dbReference type="Rhea" id="RHEA-COMP:10000"/>
        <dbReference type="Rhea" id="RHEA-COMP:10001"/>
        <dbReference type="Rhea" id="RHEA-COMP:13337"/>
        <dbReference type="Rhea" id="RHEA-COMP:13338"/>
        <dbReference type="Rhea" id="RHEA-COMP:13339"/>
        <dbReference type="Rhea" id="RHEA-COMP:13340"/>
        <dbReference type="ChEBI" id="CHEBI:15378"/>
        <dbReference type="ChEBI" id="CHEBI:29950"/>
        <dbReference type="ChEBI" id="CHEBI:30616"/>
        <dbReference type="ChEBI" id="CHEBI:33019"/>
        <dbReference type="ChEBI" id="CHEBI:33737"/>
        <dbReference type="ChEBI" id="CHEBI:33738"/>
        <dbReference type="ChEBI" id="CHEBI:61963"/>
        <dbReference type="ChEBI" id="CHEBI:65315"/>
        <dbReference type="ChEBI" id="CHEBI:136798"/>
        <dbReference type="ChEBI" id="CHEBI:456215"/>
        <dbReference type="EC" id="2.8.1.4"/>
    </reaction>
</comment>
<comment type="catalytic activity">
    <reaction evidence="1">
        <text>[ThiS sulfur-carrier protein]-C-terminal Gly-Gly-AMP + S-sulfanyl-L-cysteinyl-[cysteine desulfurase] + AH2 = [ThiS sulfur-carrier protein]-C-terminal-Gly-aminoethanethioate + L-cysteinyl-[cysteine desulfurase] + A + AMP + 2 H(+)</text>
        <dbReference type="Rhea" id="RHEA:43340"/>
        <dbReference type="Rhea" id="RHEA-COMP:12157"/>
        <dbReference type="Rhea" id="RHEA-COMP:12158"/>
        <dbReference type="Rhea" id="RHEA-COMP:12910"/>
        <dbReference type="Rhea" id="RHEA-COMP:19908"/>
        <dbReference type="ChEBI" id="CHEBI:13193"/>
        <dbReference type="ChEBI" id="CHEBI:15378"/>
        <dbReference type="ChEBI" id="CHEBI:17499"/>
        <dbReference type="ChEBI" id="CHEBI:29950"/>
        <dbReference type="ChEBI" id="CHEBI:61963"/>
        <dbReference type="ChEBI" id="CHEBI:90618"/>
        <dbReference type="ChEBI" id="CHEBI:232372"/>
        <dbReference type="ChEBI" id="CHEBI:456215"/>
    </reaction>
</comment>
<comment type="pathway">
    <text evidence="1">Cofactor biosynthesis; thiamine diphosphate biosynthesis.</text>
</comment>
<comment type="subcellular location">
    <subcellularLocation>
        <location evidence="1">Cytoplasm</location>
    </subcellularLocation>
</comment>
<comment type="similarity">
    <text evidence="1">Belongs to the ThiI family.</text>
</comment>
<sequence length="483" mass="54894">MKFIIKLFPEITIKSQSVRLRFIKILTTNIRNVLKHLEDDTLAIVRHWDHIELRTKDDNLGPEICDALTRIPGIHHILEVEDRSYSDMHNIFEQTLEAYRETLVGKTFCVRVKRRGKHEFSSGDVERYVGGGLNQHIESAKVNLTRPQVTVNLEVDQDKLILVKARHEGLGGFPIGTQEDVLSLISGGFDSGVSSYMLMRRGCRVHYCFFNLGGSAHEIGVKQVAHYLWNRFGSSHRVRFIAIDFEPVVGEILEKVEDGQMGVVLKRMMVRAASQVAERYGVQALVTGEALGQVSSQTLTNLRLIDNASDTLILRPLISHDKEHIINLARQIGTEDFAKTMPEYCGVISKSPTVKAVKAKIEEEESHFDFSILDRVVSEAKNVDIREIAQQSREQVVEVETVAELADTDVLLDIRAPDEQEEKPLKLDQVEVRSLPFYKLSSQFADLDQSKTYLLYCDRGVMSRLQALYLREQGYTNVKVYRP</sequence>
<gene>
    <name evidence="1" type="primary">thiI</name>
    <name type="ordered locus">YPN_0915</name>
    <name type="ORF">YP516_0991</name>
</gene>
<reference key="1">
    <citation type="journal article" date="2006" name="J. Bacteriol.">
        <title>Complete genome sequence of Yersinia pestis strains Antiqua and Nepal516: evidence of gene reduction in an emerging pathogen.</title>
        <authorList>
            <person name="Chain P.S.G."/>
            <person name="Hu P."/>
            <person name="Malfatti S.A."/>
            <person name="Radnedge L."/>
            <person name="Larimer F."/>
            <person name="Vergez L.M."/>
            <person name="Worsham P."/>
            <person name="Chu M.C."/>
            <person name="Andersen G.L."/>
        </authorList>
    </citation>
    <scope>NUCLEOTIDE SEQUENCE [LARGE SCALE GENOMIC DNA]</scope>
    <source>
        <strain>Nepal516</strain>
    </source>
</reference>
<reference key="2">
    <citation type="submission" date="2009-04" db="EMBL/GenBank/DDBJ databases">
        <title>Yersinia pestis Nepal516A whole genome shotgun sequencing project.</title>
        <authorList>
            <person name="Plunkett G. III"/>
            <person name="Anderson B.D."/>
            <person name="Baumler D.J."/>
            <person name="Burland V."/>
            <person name="Cabot E.L."/>
            <person name="Glasner J.D."/>
            <person name="Mau B."/>
            <person name="Neeno-Eckwall E."/>
            <person name="Perna N.T."/>
            <person name="Munk A.C."/>
            <person name="Tapia R."/>
            <person name="Green L.D."/>
            <person name="Rogers Y.C."/>
            <person name="Detter J.C."/>
            <person name="Bruce D.C."/>
            <person name="Brettin T.S."/>
        </authorList>
    </citation>
    <scope>NUCLEOTIDE SEQUENCE [LARGE SCALE GENOMIC DNA]</scope>
    <source>
        <strain>Nepal516</strain>
    </source>
</reference>